<sequence length="500" mass="54526">MKTTLSHALGNNFLGASPLWYKQVVIAFLIINPIAVVTLGPFVTGWLFIIEFIFTLAMALKCYPLQPGGLIAIQAVLLGLTSSDGVYHEVNKNFDVILLLMFMVAGIYFMKDMLLFIFNKLLVRVKSKIVISLIFSFSAALLSAFLDALTVTAVLISVGVGFYSVYHKAASGQSSNKNHDHAKDDSILPINTEDLNEFRSFLRDLLMHGAVGTALGGVSTLVGEPQNLLIAKVAGWDFIDFFLYVAPVSMPVLACGLLTVVILEKTAWFDYGAQLPDTVRDILNNFEKEESQKQTNKHKAKLIIQGIVAIILILSLAFHIAEVGLVGLMVIVLLTAFNGITDEHQIGHAFEEALPFTALLVVFFTIVSVIHEQHLFQPIIDIVLHMPTDSQPIMFFIANGILSAISDNVFVATVYISEVKAALDAGTITREHFNTLAVAINTGTNLPSVATPNGQAAFLFLLTSAIAPLLRLSYGKMVWMALPYTVVLSVVGGLCVTYFL</sequence>
<name>NHAB_MARMS</name>
<accession>A6VW03</accession>
<keyword id="KW-0050">Antiport</keyword>
<keyword id="KW-0997">Cell inner membrane</keyword>
<keyword id="KW-1003">Cell membrane</keyword>
<keyword id="KW-0406">Ion transport</keyword>
<keyword id="KW-0472">Membrane</keyword>
<keyword id="KW-0915">Sodium</keyword>
<keyword id="KW-0739">Sodium transport</keyword>
<keyword id="KW-0812">Transmembrane</keyword>
<keyword id="KW-1133">Transmembrane helix</keyword>
<keyword id="KW-0813">Transport</keyword>
<feature type="chain" id="PRO_0000333101" description="Na(+)/H(+) antiporter NhaB">
    <location>
        <begin position="1"/>
        <end position="500"/>
    </location>
</feature>
<feature type="transmembrane region" description="Helical" evidence="1">
    <location>
        <begin position="13"/>
        <end position="33"/>
    </location>
</feature>
<feature type="transmembrane region" description="Helical" evidence="1">
    <location>
        <begin position="34"/>
        <end position="54"/>
    </location>
</feature>
<feature type="transmembrane region" description="Helical" evidence="1">
    <location>
        <begin position="62"/>
        <end position="82"/>
    </location>
</feature>
<feature type="transmembrane region" description="Helical" evidence="1">
    <location>
        <begin position="97"/>
        <end position="117"/>
    </location>
</feature>
<feature type="transmembrane region" description="Helical" evidence="1">
    <location>
        <begin position="129"/>
        <end position="149"/>
    </location>
</feature>
<feature type="transmembrane region" description="Helical" evidence="1">
    <location>
        <begin position="242"/>
        <end position="262"/>
    </location>
</feature>
<feature type="transmembrane region" description="Helical" evidence="1">
    <location>
        <begin position="306"/>
        <end position="326"/>
    </location>
</feature>
<feature type="transmembrane region" description="Helical" evidence="1">
    <location>
        <begin position="350"/>
        <end position="370"/>
    </location>
</feature>
<feature type="transmembrane region" description="Helical" evidence="1">
    <location>
        <begin position="392"/>
        <end position="412"/>
    </location>
</feature>
<feature type="transmembrane region" description="Helical" evidence="1">
    <location>
        <begin position="449"/>
        <end position="469"/>
    </location>
</feature>
<feature type="transmembrane region" description="Helical" evidence="1">
    <location>
        <begin position="477"/>
        <end position="497"/>
    </location>
</feature>
<organism>
    <name type="scientific">Marinomonas sp. (strain MWYL1)</name>
    <dbReference type="NCBI Taxonomy" id="400668"/>
    <lineage>
        <taxon>Bacteria</taxon>
        <taxon>Pseudomonadati</taxon>
        <taxon>Pseudomonadota</taxon>
        <taxon>Gammaproteobacteria</taxon>
        <taxon>Oceanospirillales</taxon>
        <taxon>Oceanospirillaceae</taxon>
        <taxon>Marinomonas</taxon>
    </lineage>
</organism>
<proteinExistence type="inferred from homology"/>
<protein>
    <recommendedName>
        <fullName evidence="1">Na(+)/H(+) antiporter NhaB</fullName>
    </recommendedName>
    <alternativeName>
        <fullName evidence="1">Sodium/proton antiporter NhaB</fullName>
    </alternativeName>
</protein>
<dbReference type="EMBL" id="CP000749">
    <property type="protein sequence ID" value="ABR70632.1"/>
    <property type="molecule type" value="Genomic_DNA"/>
</dbReference>
<dbReference type="SMR" id="A6VW03"/>
<dbReference type="STRING" id="400668.Mmwyl1_1706"/>
<dbReference type="KEGG" id="mmw:Mmwyl1_1706"/>
<dbReference type="eggNOG" id="COG3067">
    <property type="taxonomic scope" value="Bacteria"/>
</dbReference>
<dbReference type="HOGENOM" id="CLU_041110_0_0_6"/>
<dbReference type="OrthoDB" id="5288732at2"/>
<dbReference type="GO" id="GO:0005886">
    <property type="term" value="C:plasma membrane"/>
    <property type="evidence" value="ECO:0007669"/>
    <property type="project" value="UniProtKB-SubCell"/>
</dbReference>
<dbReference type="GO" id="GO:0015385">
    <property type="term" value="F:sodium:proton antiporter activity"/>
    <property type="evidence" value="ECO:0007669"/>
    <property type="project" value="InterPro"/>
</dbReference>
<dbReference type="HAMAP" id="MF_01599">
    <property type="entry name" value="NhaB"/>
    <property type="match status" value="1"/>
</dbReference>
<dbReference type="InterPro" id="IPR004671">
    <property type="entry name" value="Na+/H+_antiporter_NhaB"/>
</dbReference>
<dbReference type="NCBIfam" id="NF007093">
    <property type="entry name" value="PRK09547.1"/>
    <property type="match status" value="1"/>
</dbReference>
<dbReference type="PANTHER" id="PTHR43302:SF1">
    <property type="entry name" value="NA(+)_H(+) ANTIPORTER NHAB"/>
    <property type="match status" value="1"/>
</dbReference>
<dbReference type="PANTHER" id="PTHR43302">
    <property type="entry name" value="TRANSPORTER ARSB-RELATED"/>
    <property type="match status" value="1"/>
</dbReference>
<dbReference type="Pfam" id="PF06450">
    <property type="entry name" value="NhaB"/>
    <property type="match status" value="1"/>
</dbReference>
<gene>
    <name evidence="1" type="primary">nhaB</name>
    <name type="ordered locus">Mmwyl1_1706</name>
</gene>
<comment type="function">
    <text evidence="1">Na(+)/H(+) antiporter that extrudes sodium in exchange for external protons.</text>
</comment>
<comment type="catalytic activity">
    <reaction evidence="1">
        <text>2 Na(+)(in) + 3 H(+)(out) = 2 Na(+)(out) + 3 H(+)(in)</text>
        <dbReference type="Rhea" id="RHEA:29247"/>
        <dbReference type="ChEBI" id="CHEBI:15378"/>
        <dbReference type="ChEBI" id="CHEBI:29101"/>
    </reaction>
    <physiologicalReaction direction="left-to-right" evidence="1">
        <dbReference type="Rhea" id="RHEA:29248"/>
    </physiologicalReaction>
</comment>
<comment type="subcellular location">
    <subcellularLocation>
        <location evidence="1">Cell inner membrane</location>
        <topology evidence="1">Multi-pass membrane protein</topology>
    </subcellularLocation>
</comment>
<comment type="similarity">
    <text evidence="1">Belongs to the NhaB Na(+)/H(+) (TC 2.A.34) antiporter family.</text>
</comment>
<evidence type="ECO:0000255" key="1">
    <source>
        <dbReference type="HAMAP-Rule" id="MF_01599"/>
    </source>
</evidence>
<reference key="1">
    <citation type="submission" date="2007-06" db="EMBL/GenBank/DDBJ databases">
        <title>Complete sequence of Marinomonas sp. MWYL1.</title>
        <authorList>
            <consortium name="US DOE Joint Genome Institute"/>
            <person name="Copeland A."/>
            <person name="Lucas S."/>
            <person name="Lapidus A."/>
            <person name="Barry K."/>
            <person name="Glavina del Rio T."/>
            <person name="Dalin E."/>
            <person name="Tice H."/>
            <person name="Pitluck S."/>
            <person name="Kiss H."/>
            <person name="Brettin T."/>
            <person name="Bruce D."/>
            <person name="Detter J.C."/>
            <person name="Han C."/>
            <person name="Schmutz J."/>
            <person name="Larimer F."/>
            <person name="Land M."/>
            <person name="Hauser L."/>
            <person name="Kyrpides N."/>
            <person name="Kim E."/>
            <person name="Johnston A.W.B."/>
            <person name="Todd J.D."/>
            <person name="Rogers R."/>
            <person name="Wexler M."/>
            <person name="Bond P.L."/>
            <person name="Li Y."/>
            <person name="Richardson P."/>
        </authorList>
    </citation>
    <scope>NUCLEOTIDE SEQUENCE [LARGE SCALE GENOMIC DNA]</scope>
    <source>
        <strain>MWYL1</strain>
    </source>
</reference>